<evidence type="ECO:0000255" key="1">
    <source>
        <dbReference type="HAMAP-Rule" id="MF_01394"/>
    </source>
</evidence>
<comment type="function">
    <text evidence="1">NDH shuttles electrons from NAD(P)H:plastoquinone, via FMN and iron-sulfur (Fe-S) centers, to quinones in the photosynthetic chain and possibly in a chloroplast respiratory chain. The immediate electron acceptor for the enzyme in this species is believed to be plastoquinone. Couples the redox reaction to proton translocation, and thus conserves the redox energy in a proton gradient.</text>
</comment>
<comment type="catalytic activity">
    <reaction evidence="1">
        <text>a plastoquinone + NADH + (n+1) H(+)(in) = a plastoquinol + NAD(+) + n H(+)(out)</text>
        <dbReference type="Rhea" id="RHEA:42608"/>
        <dbReference type="Rhea" id="RHEA-COMP:9561"/>
        <dbReference type="Rhea" id="RHEA-COMP:9562"/>
        <dbReference type="ChEBI" id="CHEBI:15378"/>
        <dbReference type="ChEBI" id="CHEBI:17757"/>
        <dbReference type="ChEBI" id="CHEBI:57540"/>
        <dbReference type="ChEBI" id="CHEBI:57945"/>
        <dbReference type="ChEBI" id="CHEBI:62192"/>
    </reaction>
</comment>
<comment type="catalytic activity">
    <reaction evidence="1">
        <text>a plastoquinone + NADPH + (n+1) H(+)(in) = a plastoquinol + NADP(+) + n H(+)(out)</text>
        <dbReference type="Rhea" id="RHEA:42612"/>
        <dbReference type="Rhea" id="RHEA-COMP:9561"/>
        <dbReference type="Rhea" id="RHEA-COMP:9562"/>
        <dbReference type="ChEBI" id="CHEBI:15378"/>
        <dbReference type="ChEBI" id="CHEBI:17757"/>
        <dbReference type="ChEBI" id="CHEBI:57783"/>
        <dbReference type="ChEBI" id="CHEBI:58349"/>
        <dbReference type="ChEBI" id="CHEBI:62192"/>
    </reaction>
</comment>
<comment type="subunit">
    <text evidence="1">NDH is composed of at least 16 different subunits, 5 of which are encoded in the nucleus.</text>
</comment>
<comment type="subcellular location">
    <subcellularLocation>
        <location evidence="1">Plastid</location>
        <location evidence="1">Chloroplast thylakoid membrane</location>
        <topology evidence="1">Multi-pass membrane protein</topology>
    </subcellularLocation>
</comment>
<comment type="similarity">
    <text evidence="1">Belongs to the complex I subunit 3 family.</text>
</comment>
<dbReference type="EC" id="7.1.1.-" evidence="1"/>
<dbReference type="EMBL" id="DQ422812">
    <property type="protein sequence ID" value="ABM87957.1"/>
    <property type="molecule type" value="Genomic_DNA"/>
</dbReference>
<dbReference type="RefSeq" id="YP_001019119.1">
    <property type="nucleotide sequence ID" value="NC_008822.1"/>
</dbReference>
<dbReference type="SMR" id="A2CI37"/>
<dbReference type="GeneID" id="4783221"/>
<dbReference type="GO" id="GO:0009535">
    <property type="term" value="C:chloroplast thylakoid membrane"/>
    <property type="evidence" value="ECO:0007669"/>
    <property type="project" value="UniProtKB-SubCell"/>
</dbReference>
<dbReference type="GO" id="GO:0030964">
    <property type="term" value="C:NADH dehydrogenase complex"/>
    <property type="evidence" value="ECO:0007669"/>
    <property type="project" value="TreeGrafter"/>
</dbReference>
<dbReference type="GO" id="GO:0008137">
    <property type="term" value="F:NADH dehydrogenase (ubiquinone) activity"/>
    <property type="evidence" value="ECO:0007669"/>
    <property type="project" value="InterPro"/>
</dbReference>
<dbReference type="GO" id="GO:0048038">
    <property type="term" value="F:quinone binding"/>
    <property type="evidence" value="ECO:0007669"/>
    <property type="project" value="UniProtKB-KW"/>
</dbReference>
<dbReference type="GO" id="GO:0019684">
    <property type="term" value="P:photosynthesis, light reaction"/>
    <property type="evidence" value="ECO:0007669"/>
    <property type="project" value="UniProtKB-UniRule"/>
</dbReference>
<dbReference type="FunFam" id="1.20.58.1610:FF:000001">
    <property type="entry name" value="NAD(P)H-quinone oxidoreductase subunit 3, chloroplastic"/>
    <property type="match status" value="1"/>
</dbReference>
<dbReference type="Gene3D" id="1.20.58.1610">
    <property type="entry name" value="NADH:ubiquinone/plastoquinone oxidoreductase, chain 3"/>
    <property type="match status" value="1"/>
</dbReference>
<dbReference type="HAMAP" id="MF_01394">
    <property type="entry name" value="NDH1_NuoA"/>
    <property type="match status" value="1"/>
</dbReference>
<dbReference type="InterPro" id="IPR023043">
    <property type="entry name" value="NAD(P)H_OxRDtase_bac/plastid"/>
</dbReference>
<dbReference type="InterPro" id="IPR000440">
    <property type="entry name" value="NADH_UbQ/plastoQ_OxRdtase_su3"/>
</dbReference>
<dbReference type="InterPro" id="IPR038430">
    <property type="entry name" value="NDAH_ubi_oxred_su3_sf"/>
</dbReference>
<dbReference type="PANTHER" id="PTHR11058">
    <property type="entry name" value="NADH-UBIQUINONE OXIDOREDUCTASE CHAIN 3"/>
    <property type="match status" value="1"/>
</dbReference>
<dbReference type="PANTHER" id="PTHR11058:SF9">
    <property type="entry name" value="NADH-UBIQUINONE OXIDOREDUCTASE CHAIN 3"/>
    <property type="match status" value="1"/>
</dbReference>
<dbReference type="Pfam" id="PF00507">
    <property type="entry name" value="Oxidored_q4"/>
    <property type="match status" value="1"/>
</dbReference>
<proteinExistence type="inferred from homology"/>
<reference key="1">
    <citation type="journal article" date="2007" name="BMC Biol.">
        <title>A clade uniting the green algae Mesostigma viride and Chlorokybus atmophyticus represents the deepest branch of the Streptophyta in chloroplast genome-based phylogenies.</title>
        <authorList>
            <person name="Lemieux C."/>
            <person name="Otis C."/>
            <person name="Turmel M."/>
        </authorList>
    </citation>
    <scope>NUCLEOTIDE SEQUENCE [LARGE SCALE GENOMIC DNA]</scope>
    <source>
        <strain>SAG 48.80</strain>
    </source>
</reference>
<sequence>MFILKGYDSFLVFLIIACLIPVLALSASKLVRPKFGGPEKYTTYESGIEPMGEAWVQFNIRYYMFALVFVIFDVETVFLYPWAVSFAQMGFISFLEALVFLSILIVGLVYAWRKGALEWS</sequence>
<gene>
    <name evidence="1" type="primary">ndhC</name>
</gene>
<geneLocation type="chloroplast"/>
<keyword id="KW-0150">Chloroplast</keyword>
<keyword id="KW-0472">Membrane</keyword>
<keyword id="KW-0520">NAD</keyword>
<keyword id="KW-0521">NADP</keyword>
<keyword id="KW-0934">Plastid</keyword>
<keyword id="KW-0618">Plastoquinone</keyword>
<keyword id="KW-0874">Quinone</keyword>
<keyword id="KW-0793">Thylakoid</keyword>
<keyword id="KW-1278">Translocase</keyword>
<keyword id="KW-0812">Transmembrane</keyword>
<keyword id="KW-1133">Transmembrane helix</keyword>
<keyword id="KW-0813">Transport</keyword>
<feature type="chain" id="PRO_0000362820" description="NAD(P)H-quinone oxidoreductase subunit 3, chloroplastic">
    <location>
        <begin position="1"/>
        <end position="120"/>
    </location>
</feature>
<feature type="transmembrane region" description="Helical" evidence="1">
    <location>
        <begin position="10"/>
        <end position="30"/>
    </location>
</feature>
<feature type="transmembrane region" description="Helical" evidence="1">
    <location>
        <begin position="64"/>
        <end position="84"/>
    </location>
</feature>
<feature type="transmembrane region" description="Helical" evidence="1">
    <location>
        <begin position="89"/>
        <end position="109"/>
    </location>
</feature>
<organism>
    <name type="scientific">Chlorokybus atmophyticus</name>
    <name type="common">Soil alga</name>
    <dbReference type="NCBI Taxonomy" id="3144"/>
    <lineage>
        <taxon>Eukaryota</taxon>
        <taxon>Viridiplantae</taxon>
        <taxon>Streptophyta</taxon>
        <taxon>Chlorokybophyceae</taxon>
        <taxon>Chlorokybales</taxon>
        <taxon>Chlorokybaceae</taxon>
        <taxon>Chlorokybus</taxon>
    </lineage>
</organism>
<accession>A2CI37</accession>
<name>NU3C_CHLAT</name>
<protein>
    <recommendedName>
        <fullName evidence="1">NAD(P)H-quinone oxidoreductase subunit 3, chloroplastic</fullName>
        <ecNumber evidence="1">7.1.1.-</ecNumber>
    </recommendedName>
    <alternativeName>
        <fullName evidence="1">NAD(P)H dehydrogenase subunit 3</fullName>
    </alternativeName>
    <alternativeName>
        <fullName evidence="1">NADH-plastoquinone oxidoreductase subunit 3</fullName>
    </alternativeName>
</protein>